<protein>
    <recommendedName>
        <fullName evidence="1">Homoserine O-succinyltransferase</fullName>
        <shortName evidence="1">HST</shortName>
        <ecNumber evidence="1">2.3.1.46</ecNumber>
    </recommendedName>
    <alternativeName>
        <fullName evidence="1">Homoserine transsuccinylase</fullName>
        <shortName evidence="1">HTS</shortName>
    </alternativeName>
</protein>
<dbReference type="EC" id="2.3.1.46" evidence="1"/>
<dbReference type="EMBL" id="CP000802">
    <property type="protein sequence ID" value="ABV08413.1"/>
    <property type="molecule type" value="Genomic_DNA"/>
</dbReference>
<dbReference type="SMR" id="A8A7A9"/>
<dbReference type="KEGG" id="ecx:EcHS_A4247"/>
<dbReference type="HOGENOM" id="CLU_057851_0_1_6"/>
<dbReference type="UniPathway" id="UPA00051">
    <property type="reaction ID" value="UER00075"/>
</dbReference>
<dbReference type="GO" id="GO:0005737">
    <property type="term" value="C:cytoplasm"/>
    <property type="evidence" value="ECO:0007669"/>
    <property type="project" value="UniProtKB-SubCell"/>
</dbReference>
<dbReference type="GO" id="GO:0004414">
    <property type="term" value="F:homoserine O-acetyltransferase activity"/>
    <property type="evidence" value="ECO:0007669"/>
    <property type="project" value="UniProtKB-UniRule"/>
</dbReference>
<dbReference type="GO" id="GO:0008899">
    <property type="term" value="F:homoserine O-succinyltransferase activity"/>
    <property type="evidence" value="ECO:0007669"/>
    <property type="project" value="UniProtKB-EC"/>
</dbReference>
<dbReference type="GO" id="GO:0019281">
    <property type="term" value="P:L-methionine biosynthetic process from homoserine via O-succinyl-L-homoserine and cystathionine"/>
    <property type="evidence" value="ECO:0007669"/>
    <property type="project" value="InterPro"/>
</dbReference>
<dbReference type="CDD" id="cd03131">
    <property type="entry name" value="GATase1_HTS"/>
    <property type="match status" value="1"/>
</dbReference>
<dbReference type="FunFam" id="3.40.50.880:FF:000004">
    <property type="entry name" value="Homoserine O-succinyltransferase"/>
    <property type="match status" value="1"/>
</dbReference>
<dbReference type="Gene3D" id="3.40.50.880">
    <property type="match status" value="1"/>
</dbReference>
<dbReference type="HAMAP" id="MF_00295">
    <property type="entry name" value="MetA_acyltransf"/>
    <property type="match status" value="1"/>
</dbReference>
<dbReference type="InterPro" id="IPR029062">
    <property type="entry name" value="Class_I_gatase-like"/>
</dbReference>
<dbReference type="InterPro" id="IPR005697">
    <property type="entry name" value="HST_MetA"/>
</dbReference>
<dbReference type="InterPro" id="IPR033752">
    <property type="entry name" value="MetA_family"/>
</dbReference>
<dbReference type="NCBIfam" id="TIGR01001">
    <property type="entry name" value="metA"/>
    <property type="match status" value="1"/>
</dbReference>
<dbReference type="PANTHER" id="PTHR20919">
    <property type="entry name" value="HOMOSERINE O-SUCCINYLTRANSFERASE"/>
    <property type="match status" value="1"/>
</dbReference>
<dbReference type="PANTHER" id="PTHR20919:SF0">
    <property type="entry name" value="HOMOSERINE O-SUCCINYLTRANSFERASE"/>
    <property type="match status" value="1"/>
</dbReference>
<dbReference type="Pfam" id="PF04204">
    <property type="entry name" value="HTS"/>
    <property type="match status" value="1"/>
</dbReference>
<dbReference type="PIRSF" id="PIRSF000450">
    <property type="entry name" value="H_ser_succinyltr"/>
    <property type="match status" value="1"/>
</dbReference>
<dbReference type="SUPFAM" id="SSF52317">
    <property type="entry name" value="Class I glutamine amidotransferase-like"/>
    <property type="match status" value="1"/>
</dbReference>
<evidence type="ECO:0000255" key="1">
    <source>
        <dbReference type="HAMAP-Rule" id="MF_00295"/>
    </source>
</evidence>
<name>METAS_ECOHS</name>
<organism>
    <name type="scientific">Escherichia coli O9:H4 (strain HS)</name>
    <dbReference type="NCBI Taxonomy" id="331112"/>
    <lineage>
        <taxon>Bacteria</taxon>
        <taxon>Pseudomonadati</taxon>
        <taxon>Pseudomonadota</taxon>
        <taxon>Gammaproteobacteria</taxon>
        <taxon>Enterobacterales</taxon>
        <taxon>Enterobacteriaceae</taxon>
        <taxon>Escherichia</taxon>
    </lineage>
</organism>
<keyword id="KW-0012">Acyltransferase</keyword>
<keyword id="KW-0028">Amino-acid biosynthesis</keyword>
<keyword id="KW-0963">Cytoplasm</keyword>
<keyword id="KW-0486">Methionine biosynthesis</keyword>
<keyword id="KW-0808">Transferase</keyword>
<comment type="function">
    <text evidence="1">Transfers a succinyl group from succinyl-CoA to L-homoserine, forming succinyl-L-homoserine.</text>
</comment>
<comment type="catalytic activity">
    <reaction evidence="1">
        <text>L-homoserine + succinyl-CoA = O-succinyl-L-homoserine + CoA</text>
        <dbReference type="Rhea" id="RHEA:22008"/>
        <dbReference type="ChEBI" id="CHEBI:57287"/>
        <dbReference type="ChEBI" id="CHEBI:57292"/>
        <dbReference type="ChEBI" id="CHEBI:57476"/>
        <dbReference type="ChEBI" id="CHEBI:57661"/>
        <dbReference type="EC" id="2.3.1.46"/>
    </reaction>
</comment>
<comment type="pathway">
    <text evidence="1">Amino-acid biosynthesis; L-methionine biosynthesis via de novo pathway; O-succinyl-L-homoserine from L-homoserine: step 1/1.</text>
</comment>
<comment type="subunit">
    <text evidence="1">Homodimer.</text>
</comment>
<comment type="subcellular location">
    <subcellularLocation>
        <location evidence="1">Cytoplasm</location>
    </subcellularLocation>
</comment>
<comment type="similarity">
    <text evidence="1">Belongs to the MetA family.</text>
</comment>
<proteinExistence type="inferred from homology"/>
<reference key="1">
    <citation type="journal article" date="2008" name="J. Bacteriol.">
        <title>The pangenome structure of Escherichia coli: comparative genomic analysis of E. coli commensal and pathogenic isolates.</title>
        <authorList>
            <person name="Rasko D.A."/>
            <person name="Rosovitz M.J."/>
            <person name="Myers G.S.A."/>
            <person name="Mongodin E.F."/>
            <person name="Fricke W.F."/>
            <person name="Gajer P."/>
            <person name="Crabtree J."/>
            <person name="Sebaihia M."/>
            <person name="Thomson N.R."/>
            <person name="Chaudhuri R."/>
            <person name="Henderson I.R."/>
            <person name="Sperandio V."/>
            <person name="Ravel J."/>
        </authorList>
    </citation>
    <scope>NUCLEOTIDE SEQUENCE [LARGE SCALE GENOMIC DNA]</scope>
    <source>
        <strain>HS</strain>
    </source>
</reference>
<feature type="chain" id="PRO_1000059291" description="Homoserine O-succinyltransferase">
    <location>
        <begin position="1"/>
        <end position="309"/>
    </location>
</feature>
<feature type="active site" description="Acyl-thioester intermediate" evidence="1">
    <location>
        <position position="142"/>
    </location>
</feature>
<feature type="active site" description="Proton acceptor" evidence="1">
    <location>
        <position position="235"/>
    </location>
</feature>
<feature type="active site" evidence="1">
    <location>
        <position position="237"/>
    </location>
</feature>
<feature type="binding site" evidence="1">
    <location>
        <position position="163"/>
    </location>
    <ligand>
        <name>substrate</name>
    </ligand>
</feature>
<feature type="binding site" evidence="1">
    <location>
        <position position="192"/>
    </location>
    <ligand>
        <name>substrate</name>
    </ligand>
</feature>
<feature type="binding site" evidence="1">
    <location>
        <position position="249"/>
    </location>
    <ligand>
        <name>substrate</name>
    </ligand>
</feature>
<feature type="site" description="Important for acyl-CoA specificity" evidence="1">
    <location>
        <position position="111"/>
    </location>
</feature>
<feature type="site" description="Important for substrate specificity" evidence="1">
    <location>
        <position position="192"/>
    </location>
</feature>
<accession>A8A7A9</accession>
<sequence>MPIRVPDELPAVNFLREENVFVMTTSRASGQEIRPLKVLILNLMPKKIETENQFLRLLSNSPLQVDIQLLRIDSRESRNTPAEHLNNFYCNFEDIQEQNFDGLIVTGAPLGLVEFNDVAYWPQIKQVLEWSKDHVTSTLFVCWAVQAALNILYGIPKQTRTDKLSGVYEHHILHPHALLTRGFDDSFLAPHSRYADFPAALIRDYTDLEILAETEEGDAYLFASKDKRIAFVTGHPEYDAQTLAQEYFRDVEAGLGPEVPYNYFPHNDPQNTPRASWRSHGNLLFTNWLNYYVYQITPYDLRHMNPTLD</sequence>
<gene>
    <name evidence="1" type="primary">metAS</name>
    <name type="ordered locus">EcHS_A4247</name>
</gene>